<reference key="1">
    <citation type="journal article" date="2002" name="Nat. Biotechnol.">
        <title>Genome sequence of the dissimilatory metal ion-reducing bacterium Shewanella oneidensis.</title>
        <authorList>
            <person name="Heidelberg J.F."/>
            <person name="Paulsen I.T."/>
            <person name="Nelson K.E."/>
            <person name="Gaidos E.J."/>
            <person name="Nelson W.C."/>
            <person name="Read T.D."/>
            <person name="Eisen J.A."/>
            <person name="Seshadri R."/>
            <person name="Ward N.L."/>
            <person name="Methe B.A."/>
            <person name="Clayton R.A."/>
            <person name="Meyer T."/>
            <person name="Tsapin A."/>
            <person name="Scott J."/>
            <person name="Beanan M.J."/>
            <person name="Brinkac L.M."/>
            <person name="Daugherty S.C."/>
            <person name="DeBoy R.T."/>
            <person name="Dodson R.J."/>
            <person name="Durkin A.S."/>
            <person name="Haft D.H."/>
            <person name="Kolonay J.F."/>
            <person name="Madupu R."/>
            <person name="Peterson J.D."/>
            <person name="Umayam L.A."/>
            <person name="White O."/>
            <person name="Wolf A.M."/>
            <person name="Vamathevan J.J."/>
            <person name="Weidman J.F."/>
            <person name="Impraim M."/>
            <person name="Lee K."/>
            <person name="Berry K.J."/>
            <person name="Lee C."/>
            <person name="Mueller J."/>
            <person name="Khouri H.M."/>
            <person name="Gill J."/>
            <person name="Utterback T.R."/>
            <person name="McDonald L.A."/>
            <person name="Feldblyum T.V."/>
            <person name="Smith H.O."/>
            <person name="Venter J.C."/>
            <person name="Nealson K.H."/>
            <person name="Fraser C.M."/>
        </authorList>
    </citation>
    <scope>NUCLEOTIDE SEQUENCE [LARGE SCALE GENOMIC DNA]</scope>
    <source>
        <strain>ATCC 700550 / JCM 31522 / CIP 106686 / LMG 19005 / NCIMB 14063 / MR-1</strain>
    </source>
</reference>
<sequence>MLTNIRAFAQQKSRLSALRLVLAFILGASTALSFAPYSLWIIYPIAMSLALWQSESLNPKASFFHWLSFGFGCFAVGISWVHVSMDTFGGLPLPASVALMALLALYLALYPALTGLGLAWFTRTNSHSLWRNLLLFPALWTLTEWARGWVLTGFPWIWAGYSQTEGPLKALASIIGALGLSFIIAMIAGALALCFSKRYKSLLILLPITAVAAWVAPKLSQIQPTGESVKVALVQGNIPQSMKWEPEALWPTLLKYMDLSREHFDADIIVWPEAAIPAPESMVQDFLDNANKVANLNHTSIITGIISRQQEDFYNSLIVLGNHNQKQQDNPDYESDGSNQFKKHHLLPIGEFVPFQALLRPIAPFFNLPMSSFARGDYLQPNLSALGHKVAPAICYEIAFPEQLRDSVNLGTDLLLTVSNDAWFGTSNGPLQHMEIAQMRAIELGRPLVRATNNGVTAVVDENGNITAALPQFETGVLSATIPLVTGQTWFAKIGQTPLLILCGALLLVGFIRRQKQQ</sequence>
<organism>
    <name type="scientific">Shewanella oneidensis (strain ATCC 700550 / JCM 31522 / CIP 106686 / LMG 19005 / NCIMB 14063 / MR-1)</name>
    <dbReference type="NCBI Taxonomy" id="211586"/>
    <lineage>
        <taxon>Bacteria</taxon>
        <taxon>Pseudomonadati</taxon>
        <taxon>Pseudomonadota</taxon>
        <taxon>Gammaproteobacteria</taxon>
        <taxon>Alteromonadales</taxon>
        <taxon>Shewanellaceae</taxon>
        <taxon>Shewanella</taxon>
    </lineage>
</organism>
<evidence type="ECO:0000255" key="1">
    <source>
        <dbReference type="HAMAP-Rule" id="MF_01148"/>
    </source>
</evidence>
<comment type="function">
    <text evidence="1">Catalyzes the phospholipid dependent N-acylation of the N-terminal cysteine of apolipoprotein, the last step in lipoprotein maturation.</text>
</comment>
<comment type="catalytic activity">
    <reaction evidence="1">
        <text>N-terminal S-1,2-diacyl-sn-glyceryl-L-cysteinyl-[lipoprotein] + a glycerophospholipid = N-acyl-S-1,2-diacyl-sn-glyceryl-L-cysteinyl-[lipoprotein] + a 2-acyl-sn-glycero-3-phospholipid + H(+)</text>
        <dbReference type="Rhea" id="RHEA:48228"/>
        <dbReference type="Rhea" id="RHEA-COMP:14681"/>
        <dbReference type="Rhea" id="RHEA-COMP:14684"/>
        <dbReference type="ChEBI" id="CHEBI:15378"/>
        <dbReference type="ChEBI" id="CHEBI:136912"/>
        <dbReference type="ChEBI" id="CHEBI:140656"/>
        <dbReference type="ChEBI" id="CHEBI:140657"/>
        <dbReference type="ChEBI" id="CHEBI:140660"/>
        <dbReference type="EC" id="2.3.1.269"/>
    </reaction>
</comment>
<comment type="pathway">
    <text evidence="1">Protein modification; lipoprotein biosynthesis (N-acyl transfer).</text>
</comment>
<comment type="subcellular location">
    <subcellularLocation>
        <location evidence="1">Cell inner membrane</location>
        <topology evidence="1">Multi-pass membrane protein</topology>
    </subcellularLocation>
</comment>
<comment type="similarity">
    <text evidence="1">Belongs to the CN hydrolase family. Apolipoprotein N-acyltransferase subfamily.</text>
</comment>
<name>LNT_SHEON</name>
<dbReference type="EC" id="2.3.1.269" evidence="1"/>
<dbReference type="EMBL" id="AE014299">
    <property type="protein sequence ID" value="AAN54247.1"/>
    <property type="molecule type" value="Genomic_DNA"/>
</dbReference>
<dbReference type="RefSeq" id="NP_716802.1">
    <property type="nucleotide sequence ID" value="NC_004347.2"/>
</dbReference>
<dbReference type="RefSeq" id="WP_011071408.1">
    <property type="nucleotide sequence ID" value="NC_004347.2"/>
</dbReference>
<dbReference type="SMR" id="Q8EHP1"/>
<dbReference type="STRING" id="211586.SO_1177"/>
<dbReference type="PaxDb" id="211586-SO_1177"/>
<dbReference type="KEGG" id="son:SO_1177"/>
<dbReference type="PATRIC" id="fig|211586.12.peg.1129"/>
<dbReference type="eggNOG" id="COG0815">
    <property type="taxonomic scope" value="Bacteria"/>
</dbReference>
<dbReference type="HOGENOM" id="CLU_019563_3_0_6"/>
<dbReference type="OrthoDB" id="9804277at2"/>
<dbReference type="PhylomeDB" id="Q8EHP1"/>
<dbReference type="BioCyc" id="SONE211586:G1GMP-1081-MONOMER"/>
<dbReference type="UniPathway" id="UPA00666"/>
<dbReference type="Proteomes" id="UP000008186">
    <property type="component" value="Chromosome"/>
</dbReference>
<dbReference type="GO" id="GO:0005886">
    <property type="term" value="C:plasma membrane"/>
    <property type="evidence" value="ECO:0007669"/>
    <property type="project" value="UniProtKB-SubCell"/>
</dbReference>
<dbReference type="GO" id="GO:0016410">
    <property type="term" value="F:N-acyltransferase activity"/>
    <property type="evidence" value="ECO:0007669"/>
    <property type="project" value="UniProtKB-UniRule"/>
</dbReference>
<dbReference type="GO" id="GO:0042158">
    <property type="term" value="P:lipoprotein biosynthetic process"/>
    <property type="evidence" value="ECO:0007669"/>
    <property type="project" value="UniProtKB-UniRule"/>
</dbReference>
<dbReference type="CDD" id="cd07571">
    <property type="entry name" value="ALP_N-acyl_transferase"/>
    <property type="match status" value="1"/>
</dbReference>
<dbReference type="Gene3D" id="3.60.110.10">
    <property type="entry name" value="Carbon-nitrogen hydrolase"/>
    <property type="match status" value="1"/>
</dbReference>
<dbReference type="HAMAP" id="MF_01148">
    <property type="entry name" value="Lnt"/>
    <property type="match status" value="1"/>
</dbReference>
<dbReference type="InterPro" id="IPR004563">
    <property type="entry name" value="Apolipo_AcylTrfase"/>
</dbReference>
<dbReference type="InterPro" id="IPR003010">
    <property type="entry name" value="C-N_Hydrolase"/>
</dbReference>
<dbReference type="InterPro" id="IPR036526">
    <property type="entry name" value="C-N_Hydrolase_sf"/>
</dbReference>
<dbReference type="InterPro" id="IPR045378">
    <property type="entry name" value="LNT_N"/>
</dbReference>
<dbReference type="NCBIfam" id="TIGR00546">
    <property type="entry name" value="lnt"/>
    <property type="match status" value="1"/>
</dbReference>
<dbReference type="PANTHER" id="PTHR38686">
    <property type="entry name" value="APOLIPOPROTEIN N-ACYLTRANSFERASE"/>
    <property type="match status" value="1"/>
</dbReference>
<dbReference type="PANTHER" id="PTHR38686:SF1">
    <property type="entry name" value="APOLIPOPROTEIN N-ACYLTRANSFERASE"/>
    <property type="match status" value="1"/>
</dbReference>
<dbReference type="Pfam" id="PF00795">
    <property type="entry name" value="CN_hydrolase"/>
    <property type="match status" value="1"/>
</dbReference>
<dbReference type="Pfam" id="PF20154">
    <property type="entry name" value="LNT_N"/>
    <property type="match status" value="1"/>
</dbReference>
<dbReference type="SUPFAM" id="SSF56317">
    <property type="entry name" value="Carbon-nitrogen hydrolase"/>
    <property type="match status" value="1"/>
</dbReference>
<dbReference type="PROSITE" id="PS50263">
    <property type="entry name" value="CN_HYDROLASE"/>
    <property type="match status" value="1"/>
</dbReference>
<proteinExistence type="inferred from homology"/>
<keyword id="KW-0012">Acyltransferase</keyword>
<keyword id="KW-0997">Cell inner membrane</keyword>
<keyword id="KW-1003">Cell membrane</keyword>
<keyword id="KW-0472">Membrane</keyword>
<keyword id="KW-1185">Reference proteome</keyword>
<keyword id="KW-0808">Transferase</keyword>
<keyword id="KW-0812">Transmembrane</keyword>
<keyword id="KW-1133">Transmembrane helix</keyword>
<protein>
    <recommendedName>
        <fullName evidence="1">Apolipoprotein N-acyltransferase</fullName>
        <shortName evidence="1">ALP N-acyltransferase</shortName>
        <ecNumber evidence="1">2.3.1.269</ecNumber>
    </recommendedName>
</protein>
<gene>
    <name evidence="1" type="primary">lnt</name>
    <name type="ordered locus">SO_1177</name>
</gene>
<accession>Q8EHP1</accession>
<feature type="chain" id="PRO_0000178097" description="Apolipoprotein N-acyltransferase">
    <location>
        <begin position="1"/>
        <end position="518"/>
    </location>
</feature>
<feature type="transmembrane region" description="Helical" evidence="1">
    <location>
        <begin position="22"/>
        <end position="42"/>
    </location>
</feature>
<feature type="transmembrane region" description="Helical" evidence="1">
    <location>
        <begin position="63"/>
        <end position="83"/>
    </location>
</feature>
<feature type="transmembrane region" description="Helical" evidence="1">
    <location>
        <begin position="101"/>
        <end position="121"/>
    </location>
</feature>
<feature type="transmembrane region" description="Helical" evidence="1">
    <location>
        <begin position="134"/>
        <end position="154"/>
    </location>
</feature>
<feature type="transmembrane region" description="Helical" evidence="1">
    <location>
        <begin position="174"/>
        <end position="194"/>
    </location>
</feature>
<feature type="transmembrane region" description="Helical" evidence="1">
    <location>
        <begin position="202"/>
        <end position="222"/>
    </location>
</feature>
<feature type="transmembrane region" description="Helical" evidence="1">
    <location>
        <begin position="492"/>
        <end position="512"/>
    </location>
</feature>
<feature type="domain" description="CN hydrolase" evidence="1">
    <location>
        <begin position="234"/>
        <end position="484"/>
    </location>
</feature>
<feature type="active site" description="Proton acceptor" evidence="1">
    <location>
        <position position="273"/>
    </location>
</feature>
<feature type="active site" evidence="1">
    <location>
        <position position="343"/>
    </location>
</feature>
<feature type="active site" description="Nucleophile" evidence="1">
    <location>
        <position position="395"/>
    </location>
</feature>